<keyword id="KW-0378">Hydrolase</keyword>
<keyword id="KW-0511">Multifunctional enzyme</keyword>
<keyword id="KW-0658">Purine biosynthesis</keyword>
<keyword id="KW-1185">Reference proteome</keyword>
<keyword id="KW-0808">Transferase</keyword>
<protein>
    <recommendedName>
        <fullName evidence="1">Bifunctional purine biosynthesis protein PurH</fullName>
    </recommendedName>
    <domain>
        <recommendedName>
            <fullName evidence="1">Phosphoribosylaminoimidazolecarboxamide formyltransferase</fullName>
            <ecNumber evidence="1">2.1.2.3</ecNumber>
        </recommendedName>
        <alternativeName>
            <fullName evidence="1">AICAR transformylase</fullName>
        </alternativeName>
    </domain>
    <domain>
        <recommendedName>
            <fullName evidence="1">IMP cyclohydrolase</fullName>
            <ecNumber evidence="1">3.5.4.10</ecNumber>
        </recommendedName>
        <alternativeName>
            <fullName evidence="1">ATIC</fullName>
        </alternativeName>
        <alternativeName>
            <fullName evidence="1">IMP synthase</fullName>
        </alternativeName>
        <alternativeName>
            <fullName evidence="1">Inosinicase</fullName>
        </alternativeName>
    </domain>
</protein>
<gene>
    <name evidence="1" type="primary">purH</name>
    <name type="ordered locus">Sama_0395</name>
</gene>
<feature type="chain" id="PRO_1000018950" description="Bifunctional purine biosynthesis protein PurH">
    <location>
        <begin position="1"/>
        <end position="529"/>
    </location>
</feature>
<feature type="domain" description="MGS-like" evidence="2">
    <location>
        <begin position="1"/>
        <end position="148"/>
    </location>
</feature>
<proteinExistence type="inferred from homology"/>
<reference key="1">
    <citation type="submission" date="2006-12" db="EMBL/GenBank/DDBJ databases">
        <title>Complete sequence of Shewanella amazonensis SB2B.</title>
        <authorList>
            <consortium name="US DOE Joint Genome Institute"/>
            <person name="Copeland A."/>
            <person name="Lucas S."/>
            <person name="Lapidus A."/>
            <person name="Barry K."/>
            <person name="Detter J.C."/>
            <person name="Glavina del Rio T."/>
            <person name="Hammon N."/>
            <person name="Israni S."/>
            <person name="Dalin E."/>
            <person name="Tice H."/>
            <person name="Pitluck S."/>
            <person name="Munk A.C."/>
            <person name="Brettin T."/>
            <person name="Bruce D."/>
            <person name="Han C."/>
            <person name="Tapia R."/>
            <person name="Gilna P."/>
            <person name="Schmutz J."/>
            <person name="Larimer F."/>
            <person name="Land M."/>
            <person name="Hauser L."/>
            <person name="Kyrpides N."/>
            <person name="Mikhailova N."/>
            <person name="Fredrickson J."/>
            <person name="Richardson P."/>
        </authorList>
    </citation>
    <scope>NUCLEOTIDE SEQUENCE [LARGE SCALE GENOMIC DNA]</scope>
    <source>
        <strain>ATCC BAA-1098 / SB2B</strain>
    </source>
</reference>
<evidence type="ECO:0000255" key="1">
    <source>
        <dbReference type="HAMAP-Rule" id="MF_00139"/>
    </source>
</evidence>
<evidence type="ECO:0000255" key="2">
    <source>
        <dbReference type="PROSITE-ProRule" id="PRU01202"/>
    </source>
</evidence>
<organism>
    <name type="scientific">Shewanella amazonensis (strain ATCC BAA-1098 / SB2B)</name>
    <dbReference type="NCBI Taxonomy" id="326297"/>
    <lineage>
        <taxon>Bacteria</taxon>
        <taxon>Pseudomonadati</taxon>
        <taxon>Pseudomonadota</taxon>
        <taxon>Gammaproteobacteria</taxon>
        <taxon>Alteromonadales</taxon>
        <taxon>Shewanellaceae</taxon>
        <taxon>Shewanella</taxon>
    </lineage>
</organism>
<sequence length="529" mass="56677">MNNARPIRRALLSVSDKTGILEFAQALHAQGVELLSTGGTAKLLADNGVPVIEVSDYTGHPEIMDGRVKTLHPKVHGGILARRGQDEDVMAANNIGPIDLVAVNLYPFAATVAKPGCTLEDAIENIDIGGPTMVRAAAKNHKDVVIVVNAKDYDRVLAEMSANGGSTSHATRFDLAIAAFEHTAAYDGMIANYFGTMVPAHSSDECHDDSKFPRTFNTQLVKKQDLRYGENSHQSAAFYVDLNSDEASVATATQLQGKALSYNNIADTDAALECVKEFDAPACVIVKHANPCGVALGDNLLDAYNRAYKTDPTSAFGGIIAFNRELDGETAAAIVERQFVEVIIAPVVSQAARDVVAKKTNVRLLECGQWTAQTKGLDYKRVNGGLLIQDRDQGMVTEAELKVVTKRVPTEAELKDLMFCWKVAKFVKSNAIVYAKEGMTIGVGAGQMSRVYSAKIAGIKAADEGLVVEGSVMASDAFFPFRDGIDAAAAAGISCIIQPGGSIRDEEVIAAADEHGMAMVFTNMRHFRH</sequence>
<dbReference type="EC" id="2.1.2.3" evidence="1"/>
<dbReference type="EC" id="3.5.4.10" evidence="1"/>
<dbReference type="EMBL" id="CP000507">
    <property type="protein sequence ID" value="ABL98605.1"/>
    <property type="molecule type" value="Genomic_DNA"/>
</dbReference>
<dbReference type="RefSeq" id="WP_011758515.1">
    <property type="nucleotide sequence ID" value="NC_008700.1"/>
</dbReference>
<dbReference type="SMR" id="A1S2J9"/>
<dbReference type="STRING" id="326297.Sama_0395"/>
<dbReference type="KEGG" id="saz:Sama_0395"/>
<dbReference type="eggNOG" id="COG0138">
    <property type="taxonomic scope" value="Bacteria"/>
</dbReference>
<dbReference type="HOGENOM" id="CLU_016316_5_2_6"/>
<dbReference type="OrthoDB" id="9802065at2"/>
<dbReference type="UniPathway" id="UPA00074">
    <property type="reaction ID" value="UER00133"/>
</dbReference>
<dbReference type="UniPathway" id="UPA00074">
    <property type="reaction ID" value="UER00135"/>
</dbReference>
<dbReference type="Proteomes" id="UP000009175">
    <property type="component" value="Chromosome"/>
</dbReference>
<dbReference type="GO" id="GO:0005829">
    <property type="term" value="C:cytosol"/>
    <property type="evidence" value="ECO:0007669"/>
    <property type="project" value="TreeGrafter"/>
</dbReference>
<dbReference type="GO" id="GO:0003937">
    <property type="term" value="F:IMP cyclohydrolase activity"/>
    <property type="evidence" value="ECO:0007669"/>
    <property type="project" value="UniProtKB-UniRule"/>
</dbReference>
<dbReference type="GO" id="GO:0004643">
    <property type="term" value="F:phosphoribosylaminoimidazolecarboxamide formyltransferase activity"/>
    <property type="evidence" value="ECO:0007669"/>
    <property type="project" value="UniProtKB-UniRule"/>
</dbReference>
<dbReference type="GO" id="GO:0006189">
    <property type="term" value="P:'de novo' IMP biosynthetic process"/>
    <property type="evidence" value="ECO:0007669"/>
    <property type="project" value="UniProtKB-UniRule"/>
</dbReference>
<dbReference type="CDD" id="cd01421">
    <property type="entry name" value="IMPCH"/>
    <property type="match status" value="1"/>
</dbReference>
<dbReference type="FunFam" id="3.40.140.20:FF:000001">
    <property type="entry name" value="Bifunctional purine biosynthesis protein PurH"/>
    <property type="match status" value="1"/>
</dbReference>
<dbReference type="FunFam" id="3.40.140.20:FF:000002">
    <property type="entry name" value="Bifunctional purine biosynthesis protein PurH"/>
    <property type="match status" value="1"/>
</dbReference>
<dbReference type="FunFam" id="3.40.50.1380:FF:000001">
    <property type="entry name" value="Bifunctional purine biosynthesis protein PurH"/>
    <property type="match status" value="1"/>
</dbReference>
<dbReference type="Gene3D" id="3.40.140.20">
    <property type="match status" value="2"/>
</dbReference>
<dbReference type="Gene3D" id="3.40.50.1380">
    <property type="entry name" value="Methylglyoxal synthase-like domain"/>
    <property type="match status" value="1"/>
</dbReference>
<dbReference type="HAMAP" id="MF_00139">
    <property type="entry name" value="PurH"/>
    <property type="match status" value="1"/>
</dbReference>
<dbReference type="InterPro" id="IPR024051">
    <property type="entry name" value="AICAR_Tfase_dup_dom_sf"/>
</dbReference>
<dbReference type="InterPro" id="IPR016193">
    <property type="entry name" value="Cytidine_deaminase-like"/>
</dbReference>
<dbReference type="InterPro" id="IPR011607">
    <property type="entry name" value="MGS-like_dom"/>
</dbReference>
<dbReference type="InterPro" id="IPR036914">
    <property type="entry name" value="MGS-like_dom_sf"/>
</dbReference>
<dbReference type="InterPro" id="IPR002695">
    <property type="entry name" value="PurH-like"/>
</dbReference>
<dbReference type="NCBIfam" id="NF002049">
    <property type="entry name" value="PRK00881.1"/>
    <property type="match status" value="1"/>
</dbReference>
<dbReference type="NCBIfam" id="TIGR00355">
    <property type="entry name" value="purH"/>
    <property type="match status" value="1"/>
</dbReference>
<dbReference type="PANTHER" id="PTHR11692:SF0">
    <property type="entry name" value="BIFUNCTIONAL PURINE BIOSYNTHESIS PROTEIN ATIC"/>
    <property type="match status" value="1"/>
</dbReference>
<dbReference type="PANTHER" id="PTHR11692">
    <property type="entry name" value="BIFUNCTIONAL PURINE BIOSYNTHESIS PROTEIN PURH"/>
    <property type="match status" value="1"/>
</dbReference>
<dbReference type="Pfam" id="PF01808">
    <property type="entry name" value="AICARFT_IMPCHas"/>
    <property type="match status" value="1"/>
</dbReference>
<dbReference type="Pfam" id="PF02142">
    <property type="entry name" value="MGS"/>
    <property type="match status" value="1"/>
</dbReference>
<dbReference type="PIRSF" id="PIRSF000414">
    <property type="entry name" value="AICARFT_IMPCHas"/>
    <property type="match status" value="1"/>
</dbReference>
<dbReference type="SMART" id="SM00798">
    <property type="entry name" value="AICARFT_IMPCHas"/>
    <property type="match status" value="1"/>
</dbReference>
<dbReference type="SMART" id="SM00851">
    <property type="entry name" value="MGS"/>
    <property type="match status" value="1"/>
</dbReference>
<dbReference type="SUPFAM" id="SSF53927">
    <property type="entry name" value="Cytidine deaminase-like"/>
    <property type="match status" value="1"/>
</dbReference>
<dbReference type="SUPFAM" id="SSF52335">
    <property type="entry name" value="Methylglyoxal synthase-like"/>
    <property type="match status" value="1"/>
</dbReference>
<dbReference type="PROSITE" id="PS51855">
    <property type="entry name" value="MGS"/>
    <property type="match status" value="1"/>
</dbReference>
<comment type="catalytic activity">
    <reaction evidence="1">
        <text>(6R)-10-formyltetrahydrofolate + 5-amino-1-(5-phospho-beta-D-ribosyl)imidazole-4-carboxamide = 5-formamido-1-(5-phospho-D-ribosyl)imidazole-4-carboxamide + (6S)-5,6,7,8-tetrahydrofolate</text>
        <dbReference type="Rhea" id="RHEA:22192"/>
        <dbReference type="ChEBI" id="CHEBI:57453"/>
        <dbReference type="ChEBI" id="CHEBI:58467"/>
        <dbReference type="ChEBI" id="CHEBI:58475"/>
        <dbReference type="ChEBI" id="CHEBI:195366"/>
        <dbReference type="EC" id="2.1.2.3"/>
    </reaction>
</comment>
<comment type="catalytic activity">
    <reaction evidence="1">
        <text>IMP + H2O = 5-formamido-1-(5-phospho-D-ribosyl)imidazole-4-carboxamide</text>
        <dbReference type="Rhea" id="RHEA:18445"/>
        <dbReference type="ChEBI" id="CHEBI:15377"/>
        <dbReference type="ChEBI" id="CHEBI:58053"/>
        <dbReference type="ChEBI" id="CHEBI:58467"/>
        <dbReference type="EC" id="3.5.4.10"/>
    </reaction>
</comment>
<comment type="pathway">
    <text evidence="1">Purine metabolism; IMP biosynthesis via de novo pathway; 5-formamido-1-(5-phospho-D-ribosyl)imidazole-4-carboxamide from 5-amino-1-(5-phospho-D-ribosyl)imidazole-4-carboxamide (10-formyl THF route): step 1/1.</text>
</comment>
<comment type="pathway">
    <text evidence="1">Purine metabolism; IMP biosynthesis via de novo pathway; IMP from 5-formamido-1-(5-phospho-D-ribosyl)imidazole-4-carboxamide: step 1/1.</text>
</comment>
<comment type="domain">
    <text evidence="1">The IMP cyclohydrolase activity resides in the N-terminal region.</text>
</comment>
<comment type="similarity">
    <text evidence="1">Belongs to the PurH family.</text>
</comment>
<name>PUR9_SHEAM</name>
<accession>A1S2J9</accession>